<gene>
    <name evidence="1" type="primary">aspS</name>
    <name type="ordered locus">RC0187</name>
</gene>
<name>SYDND_RICCN</name>
<proteinExistence type="inferred from homology"/>
<evidence type="ECO:0000255" key="1">
    <source>
        <dbReference type="HAMAP-Rule" id="MF_00044"/>
    </source>
</evidence>
<evidence type="ECO:0000305" key="2"/>
<dbReference type="EC" id="6.1.1.23" evidence="1"/>
<dbReference type="EMBL" id="AE006914">
    <property type="protein sequence ID" value="AAL02725.1"/>
    <property type="status" value="ALT_INIT"/>
    <property type="molecule type" value="Genomic_DNA"/>
</dbReference>
<dbReference type="PIR" id="C97723">
    <property type="entry name" value="C97723"/>
</dbReference>
<dbReference type="RefSeq" id="WP_029374431.1">
    <property type="nucleotide sequence ID" value="NC_003103.1"/>
</dbReference>
<dbReference type="SMR" id="Q92J82"/>
<dbReference type="GeneID" id="928001"/>
<dbReference type="KEGG" id="rco:RC0187"/>
<dbReference type="PATRIC" id="fig|272944.4.peg.216"/>
<dbReference type="HOGENOM" id="CLU_014330_3_2_5"/>
<dbReference type="Proteomes" id="UP000000816">
    <property type="component" value="Chromosome"/>
</dbReference>
<dbReference type="GO" id="GO:0005737">
    <property type="term" value="C:cytoplasm"/>
    <property type="evidence" value="ECO:0007669"/>
    <property type="project" value="UniProtKB-SubCell"/>
</dbReference>
<dbReference type="GO" id="GO:0004815">
    <property type="term" value="F:aspartate-tRNA ligase activity"/>
    <property type="evidence" value="ECO:0007669"/>
    <property type="project" value="UniProtKB-UniRule"/>
</dbReference>
<dbReference type="GO" id="GO:0050560">
    <property type="term" value="F:aspartate-tRNA(Asn) ligase activity"/>
    <property type="evidence" value="ECO:0007669"/>
    <property type="project" value="UniProtKB-EC"/>
</dbReference>
<dbReference type="GO" id="GO:0005524">
    <property type="term" value="F:ATP binding"/>
    <property type="evidence" value="ECO:0007669"/>
    <property type="project" value="UniProtKB-UniRule"/>
</dbReference>
<dbReference type="GO" id="GO:0003676">
    <property type="term" value="F:nucleic acid binding"/>
    <property type="evidence" value="ECO:0007669"/>
    <property type="project" value="InterPro"/>
</dbReference>
<dbReference type="GO" id="GO:0006422">
    <property type="term" value="P:aspartyl-tRNA aminoacylation"/>
    <property type="evidence" value="ECO:0007669"/>
    <property type="project" value="UniProtKB-UniRule"/>
</dbReference>
<dbReference type="CDD" id="cd00777">
    <property type="entry name" value="AspRS_core"/>
    <property type="match status" value="1"/>
</dbReference>
<dbReference type="CDD" id="cd04317">
    <property type="entry name" value="EcAspRS_like_N"/>
    <property type="match status" value="1"/>
</dbReference>
<dbReference type="Gene3D" id="3.30.930.10">
    <property type="entry name" value="Bira Bifunctional Protein, Domain 2"/>
    <property type="match status" value="1"/>
</dbReference>
<dbReference type="Gene3D" id="3.30.1360.30">
    <property type="entry name" value="GAD-like domain"/>
    <property type="match status" value="1"/>
</dbReference>
<dbReference type="Gene3D" id="2.40.50.140">
    <property type="entry name" value="Nucleic acid-binding proteins"/>
    <property type="match status" value="1"/>
</dbReference>
<dbReference type="HAMAP" id="MF_00044">
    <property type="entry name" value="Asp_tRNA_synth_type1"/>
    <property type="match status" value="1"/>
</dbReference>
<dbReference type="InterPro" id="IPR004364">
    <property type="entry name" value="Aa-tRNA-synt_II"/>
</dbReference>
<dbReference type="InterPro" id="IPR006195">
    <property type="entry name" value="aa-tRNA-synth_II"/>
</dbReference>
<dbReference type="InterPro" id="IPR045864">
    <property type="entry name" value="aa-tRNA-synth_II/BPL/LPL"/>
</dbReference>
<dbReference type="InterPro" id="IPR004524">
    <property type="entry name" value="Asp-tRNA-ligase_1"/>
</dbReference>
<dbReference type="InterPro" id="IPR047089">
    <property type="entry name" value="Asp-tRNA-ligase_1_N"/>
</dbReference>
<dbReference type="InterPro" id="IPR002312">
    <property type="entry name" value="Asp/Asn-tRNA-synth_IIb"/>
</dbReference>
<dbReference type="InterPro" id="IPR047090">
    <property type="entry name" value="AspRS_core"/>
</dbReference>
<dbReference type="InterPro" id="IPR004115">
    <property type="entry name" value="GAD-like_sf"/>
</dbReference>
<dbReference type="InterPro" id="IPR029351">
    <property type="entry name" value="GAD_dom"/>
</dbReference>
<dbReference type="InterPro" id="IPR012340">
    <property type="entry name" value="NA-bd_OB-fold"/>
</dbReference>
<dbReference type="InterPro" id="IPR004365">
    <property type="entry name" value="NA-bd_OB_tRNA"/>
</dbReference>
<dbReference type="NCBIfam" id="TIGR00459">
    <property type="entry name" value="aspS_bact"/>
    <property type="match status" value="1"/>
</dbReference>
<dbReference type="NCBIfam" id="NF001750">
    <property type="entry name" value="PRK00476.1"/>
    <property type="match status" value="1"/>
</dbReference>
<dbReference type="PANTHER" id="PTHR22594:SF5">
    <property type="entry name" value="ASPARTATE--TRNA LIGASE, MITOCHONDRIAL"/>
    <property type="match status" value="1"/>
</dbReference>
<dbReference type="PANTHER" id="PTHR22594">
    <property type="entry name" value="ASPARTYL/LYSYL-TRNA SYNTHETASE"/>
    <property type="match status" value="1"/>
</dbReference>
<dbReference type="Pfam" id="PF02938">
    <property type="entry name" value="GAD"/>
    <property type="match status" value="1"/>
</dbReference>
<dbReference type="Pfam" id="PF00152">
    <property type="entry name" value="tRNA-synt_2"/>
    <property type="match status" value="1"/>
</dbReference>
<dbReference type="Pfam" id="PF01336">
    <property type="entry name" value="tRNA_anti-codon"/>
    <property type="match status" value="1"/>
</dbReference>
<dbReference type="PRINTS" id="PR01042">
    <property type="entry name" value="TRNASYNTHASP"/>
</dbReference>
<dbReference type="SUPFAM" id="SSF55681">
    <property type="entry name" value="Class II aaRS and biotin synthetases"/>
    <property type="match status" value="1"/>
</dbReference>
<dbReference type="SUPFAM" id="SSF55261">
    <property type="entry name" value="GAD domain-like"/>
    <property type="match status" value="1"/>
</dbReference>
<dbReference type="SUPFAM" id="SSF50249">
    <property type="entry name" value="Nucleic acid-binding proteins"/>
    <property type="match status" value="1"/>
</dbReference>
<dbReference type="PROSITE" id="PS50862">
    <property type="entry name" value="AA_TRNA_LIGASE_II"/>
    <property type="match status" value="1"/>
</dbReference>
<protein>
    <recommendedName>
        <fullName evidence="1">Aspartate--tRNA(Asp/Asn) ligase</fullName>
        <ecNumber evidence="1">6.1.1.23</ecNumber>
    </recommendedName>
    <alternativeName>
        <fullName evidence="1">Aspartyl-tRNA synthetase</fullName>
        <shortName evidence="1">AspRS</shortName>
    </alternativeName>
    <alternativeName>
        <fullName evidence="1">Non-discriminating aspartyl-tRNA synthetase</fullName>
        <shortName evidence="1">ND-AspRS</shortName>
    </alternativeName>
</protein>
<keyword id="KW-0030">Aminoacyl-tRNA synthetase</keyword>
<keyword id="KW-0067">ATP-binding</keyword>
<keyword id="KW-0963">Cytoplasm</keyword>
<keyword id="KW-0436">Ligase</keyword>
<keyword id="KW-0547">Nucleotide-binding</keyword>
<keyword id="KW-0648">Protein biosynthesis</keyword>
<comment type="function">
    <text evidence="1">Aspartyl-tRNA synthetase with relaxed tRNA specificity since it is able to aspartylate not only its cognate tRNA(Asp) but also tRNA(Asn). Reaction proceeds in two steps: L-aspartate is first activated by ATP to form Asp-AMP and then transferred to the acceptor end of tRNA(Asp/Asn).</text>
</comment>
<comment type="catalytic activity">
    <reaction evidence="1">
        <text>tRNA(Asx) + L-aspartate + ATP = L-aspartyl-tRNA(Asx) + AMP + diphosphate</text>
        <dbReference type="Rhea" id="RHEA:18349"/>
        <dbReference type="Rhea" id="RHEA-COMP:9710"/>
        <dbReference type="Rhea" id="RHEA-COMP:9711"/>
        <dbReference type="ChEBI" id="CHEBI:29991"/>
        <dbReference type="ChEBI" id="CHEBI:30616"/>
        <dbReference type="ChEBI" id="CHEBI:33019"/>
        <dbReference type="ChEBI" id="CHEBI:78442"/>
        <dbReference type="ChEBI" id="CHEBI:78516"/>
        <dbReference type="ChEBI" id="CHEBI:456215"/>
        <dbReference type="EC" id="6.1.1.23"/>
    </reaction>
</comment>
<comment type="subunit">
    <text evidence="1">Homodimer.</text>
</comment>
<comment type="subcellular location">
    <subcellularLocation>
        <location evidence="1">Cytoplasm</location>
    </subcellularLocation>
</comment>
<comment type="similarity">
    <text evidence="1">Belongs to the class-II aminoacyl-tRNA synthetase family. Type 1 subfamily.</text>
</comment>
<comment type="sequence caution" evidence="2">
    <conflict type="erroneous initiation">
        <sequence resource="EMBL-CDS" id="AAL02725"/>
    </conflict>
</comment>
<organism>
    <name type="scientific">Rickettsia conorii (strain ATCC VR-613 / Malish 7)</name>
    <dbReference type="NCBI Taxonomy" id="272944"/>
    <lineage>
        <taxon>Bacteria</taxon>
        <taxon>Pseudomonadati</taxon>
        <taxon>Pseudomonadota</taxon>
        <taxon>Alphaproteobacteria</taxon>
        <taxon>Rickettsiales</taxon>
        <taxon>Rickettsiaceae</taxon>
        <taxon>Rickettsieae</taxon>
        <taxon>Rickettsia</taxon>
        <taxon>spotted fever group</taxon>
    </lineage>
</organism>
<accession>Q92J82</accession>
<feature type="chain" id="PRO_0000110932" description="Aspartate--tRNA(Asp/Asn) ligase">
    <location>
        <begin position="1"/>
        <end position="602"/>
    </location>
</feature>
<feature type="region of interest" description="Aspartate" evidence="1">
    <location>
        <begin position="200"/>
        <end position="203"/>
    </location>
</feature>
<feature type="binding site" evidence="1">
    <location>
        <position position="176"/>
    </location>
    <ligand>
        <name>L-aspartate</name>
        <dbReference type="ChEBI" id="CHEBI:29991"/>
    </ligand>
</feature>
<feature type="binding site" evidence="1">
    <location>
        <begin position="222"/>
        <end position="224"/>
    </location>
    <ligand>
        <name>ATP</name>
        <dbReference type="ChEBI" id="CHEBI:30616"/>
    </ligand>
</feature>
<feature type="binding site" evidence="1">
    <location>
        <position position="222"/>
    </location>
    <ligand>
        <name>L-aspartate</name>
        <dbReference type="ChEBI" id="CHEBI:29991"/>
    </ligand>
</feature>
<feature type="binding site" evidence="1">
    <location>
        <position position="452"/>
    </location>
    <ligand>
        <name>L-aspartate</name>
        <dbReference type="ChEBI" id="CHEBI:29991"/>
    </ligand>
</feature>
<feature type="binding site" evidence="1">
    <location>
        <position position="490"/>
    </location>
    <ligand>
        <name>ATP</name>
        <dbReference type="ChEBI" id="CHEBI:30616"/>
    </ligand>
</feature>
<feature type="binding site" evidence="1">
    <location>
        <position position="497"/>
    </location>
    <ligand>
        <name>L-aspartate</name>
        <dbReference type="ChEBI" id="CHEBI:29991"/>
    </ligand>
</feature>
<feature type="binding site" evidence="1">
    <location>
        <begin position="542"/>
        <end position="545"/>
    </location>
    <ligand>
        <name>ATP</name>
        <dbReference type="ChEBI" id="CHEBI:30616"/>
    </ligand>
</feature>
<feature type="site" description="Important for tRNA non-discrimination" evidence="1">
    <location>
        <position position="33"/>
    </location>
</feature>
<sequence length="602" mass="68009">MHKYRTHNCNELQISDVETEVKLSGWVHRRRDHGNLVFIDLRDHYGITQIVFTDQNPQLMEDASRLRYESVITVRGTVVARSEDTINNTLPTGHVEVLAVEFSVESAADTLPFVINTEKDAPEESRLKHRFLDLRREKLHNNIILRSQIISHIRHLMTASGFTEFQTPILTASSPEGARDFLVPSRMHPGKFYALPQAPQQFKQLLMVSGFDRYFQIAPCFRDEDARADRSPGEFYQLDVEMSFVTQEDVFSTIEPVMYDLFTKFTDKKVSETPFVCIPYNESMLKYGSDKPDLRNPIIIADVTEIFRDSDFTIFRENIKKGSIVRAIPAPKAAALPRSFFDKMIEFAISEGAGGLGYIQFSETGEAKGPVVKFLSPQQLESLKATASISNGDAVFFASDKKEKAAKLAGKVRIRLGEELDLLEKDCFKFCWITDFPFYELNEETGKIDFSHNPFSMPQGGIDALEQAKTTEELLELTAYQYDIVCNGIELSSGAIRNHKPEIMYKAFSIAGYSEEEVDKRFGGMIRAFKFGAPPHGGIAPGIDRIVMLLAEATNIREIIAFPLNQQAEDLLMNAPSYVEDKALKELSIMLSPSARKNAEKE</sequence>
<reference key="1">
    <citation type="journal article" date="2001" name="Science">
        <title>Mechanisms of evolution in Rickettsia conorii and R. prowazekii.</title>
        <authorList>
            <person name="Ogata H."/>
            <person name="Audic S."/>
            <person name="Renesto-Audiffren P."/>
            <person name="Fournier P.-E."/>
            <person name="Barbe V."/>
            <person name="Samson D."/>
            <person name="Roux V."/>
            <person name="Cossart P."/>
            <person name="Weissenbach J."/>
            <person name="Claverie J.-M."/>
            <person name="Raoult D."/>
        </authorList>
    </citation>
    <scope>NUCLEOTIDE SEQUENCE [LARGE SCALE GENOMIC DNA]</scope>
    <source>
        <strain>ATCC VR-613 / Malish 7</strain>
    </source>
</reference>